<feature type="chain" id="PRO_0000327757" description="Lysosome membrane protein 2-A">
    <location>
        <begin position="1"/>
        <end position="779"/>
    </location>
</feature>
<feature type="topological domain" description="Cytoplasmic" evidence="2">
    <location>
        <begin position="1"/>
        <end position="17"/>
    </location>
</feature>
<feature type="transmembrane region" description="Helical" evidence="2">
    <location>
        <begin position="18"/>
        <end position="38"/>
    </location>
</feature>
<feature type="topological domain" description="Lumenal" evidence="2">
    <location>
        <begin position="39"/>
        <end position="732"/>
    </location>
</feature>
<feature type="transmembrane region" description="Helical" evidence="2">
    <location>
        <begin position="733"/>
        <end position="753"/>
    </location>
</feature>
<feature type="topological domain" description="Cytoplasmic" evidence="2">
    <location>
        <begin position="754"/>
        <end position="779"/>
    </location>
</feature>
<feature type="short sequence motif" description="Tyrosine-type lysosomal sorting signal" evidence="2">
    <location>
        <begin position="771"/>
        <end position="774"/>
    </location>
</feature>
<feature type="glycosylation site" description="N-linked (GlcNAc...) asparagine" evidence="2">
    <location>
        <position position="44"/>
    </location>
</feature>
<feature type="glycosylation site" description="N-linked (GlcNAc...) asparagine" evidence="2">
    <location>
        <position position="86"/>
    </location>
</feature>
<feature type="glycosylation site" description="N-linked (GlcNAc...) asparagine" evidence="2">
    <location>
        <position position="95"/>
    </location>
</feature>
<feature type="glycosylation site" description="N-linked (GlcNAc...) asparagine" evidence="2">
    <location>
        <position position="114"/>
    </location>
</feature>
<feature type="glycosylation site" description="N-linked (GlcNAc...) asparagine" evidence="2">
    <location>
        <position position="117"/>
    </location>
</feature>
<feature type="glycosylation site" description="N-linked (GlcNAc...) asparagine" evidence="2">
    <location>
        <position position="201"/>
    </location>
</feature>
<feature type="glycosylation site" description="N-linked (GlcNAc...) asparagine" evidence="2">
    <location>
        <position position="239"/>
    </location>
</feature>
<feature type="glycosylation site" description="N-linked (GlcNAc...) asparagine" evidence="2">
    <location>
        <position position="262"/>
    </location>
</feature>
<feature type="glycosylation site" description="N-linked (GlcNAc...) asparagine" evidence="2">
    <location>
        <position position="266"/>
    </location>
</feature>
<feature type="glycosylation site" description="N-linked (GlcNAc...) asparagine" evidence="2">
    <location>
        <position position="277"/>
    </location>
</feature>
<feature type="glycosylation site" description="N-linked (GlcNAc...) asparagine" evidence="2">
    <location>
        <position position="369"/>
    </location>
</feature>
<feature type="glycosylation site" description="N-linked (GlcNAc...) asparagine" evidence="2">
    <location>
        <position position="410"/>
    </location>
</feature>
<feature type="glycosylation site" description="N-linked (GlcNAc...) asparagine" evidence="2">
    <location>
        <position position="440"/>
    </location>
</feature>
<feature type="glycosylation site" description="N-linked (GlcNAc...) asparagine" evidence="2">
    <location>
        <position position="508"/>
    </location>
</feature>
<feature type="glycosylation site" description="N-linked (GlcNAc...) asparagine" evidence="2">
    <location>
        <position position="543"/>
    </location>
</feature>
<feature type="glycosylation site" description="N-linked (GlcNAc...) asparagine" evidence="2">
    <location>
        <position position="601"/>
    </location>
</feature>
<feature type="glycosylation site" description="N-linked (GlcNAc...) asparagine" evidence="2">
    <location>
        <position position="619"/>
    </location>
</feature>
<feature type="glycosylation site" description="N-linked (GlcNAc...) asparagine" evidence="2">
    <location>
        <position position="651"/>
    </location>
</feature>
<feature type="glycosylation site" description="N-linked (GlcNAc...) asparagine" evidence="2">
    <location>
        <position position="693"/>
    </location>
</feature>
<name>LMPA_DICDI</name>
<reference key="1">
    <citation type="journal article" date="1999" name="J. Cell Biol.">
        <title>Identification of a suppressor of the Dictyostelium profilin-minus phenotype as a CD36/LIMP-II homologue.</title>
        <authorList>
            <person name="Karakesisoglou I."/>
            <person name="Janssen K.-P."/>
            <person name="Eichinger L."/>
            <person name="Noegel A.A."/>
            <person name="Schleicher M."/>
        </authorList>
    </citation>
    <scope>NUCLEOTIDE SEQUENCE [MRNA]</scope>
    <scope>SUBCELLULAR LOCATION</scope>
</reference>
<reference key="2">
    <citation type="journal article" date="2005" name="Nature">
        <title>The genome of the social amoeba Dictyostelium discoideum.</title>
        <authorList>
            <person name="Eichinger L."/>
            <person name="Pachebat J.A."/>
            <person name="Gloeckner G."/>
            <person name="Rajandream M.A."/>
            <person name="Sucgang R."/>
            <person name="Berriman M."/>
            <person name="Song J."/>
            <person name="Olsen R."/>
            <person name="Szafranski K."/>
            <person name="Xu Q."/>
            <person name="Tunggal B."/>
            <person name="Kummerfeld S."/>
            <person name="Madera M."/>
            <person name="Konfortov B.A."/>
            <person name="Rivero F."/>
            <person name="Bankier A.T."/>
            <person name="Lehmann R."/>
            <person name="Hamlin N."/>
            <person name="Davies R."/>
            <person name="Gaudet P."/>
            <person name="Fey P."/>
            <person name="Pilcher K."/>
            <person name="Chen G."/>
            <person name="Saunders D."/>
            <person name="Sodergren E.J."/>
            <person name="Davis P."/>
            <person name="Kerhornou A."/>
            <person name="Nie X."/>
            <person name="Hall N."/>
            <person name="Anjard C."/>
            <person name="Hemphill L."/>
            <person name="Bason N."/>
            <person name="Farbrother P."/>
            <person name="Desany B."/>
            <person name="Just E."/>
            <person name="Morio T."/>
            <person name="Rost R."/>
            <person name="Churcher C.M."/>
            <person name="Cooper J."/>
            <person name="Haydock S."/>
            <person name="van Driessche N."/>
            <person name="Cronin A."/>
            <person name="Goodhead I."/>
            <person name="Muzny D.M."/>
            <person name="Mourier T."/>
            <person name="Pain A."/>
            <person name="Lu M."/>
            <person name="Harper D."/>
            <person name="Lindsay R."/>
            <person name="Hauser H."/>
            <person name="James K.D."/>
            <person name="Quiles M."/>
            <person name="Madan Babu M."/>
            <person name="Saito T."/>
            <person name="Buchrieser C."/>
            <person name="Wardroper A."/>
            <person name="Felder M."/>
            <person name="Thangavelu M."/>
            <person name="Johnson D."/>
            <person name="Knights A."/>
            <person name="Loulseged H."/>
            <person name="Mungall K.L."/>
            <person name="Oliver K."/>
            <person name="Price C."/>
            <person name="Quail M.A."/>
            <person name="Urushihara H."/>
            <person name="Hernandez J."/>
            <person name="Rabbinowitsch E."/>
            <person name="Steffen D."/>
            <person name="Sanders M."/>
            <person name="Ma J."/>
            <person name="Kohara Y."/>
            <person name="Sharp S."/>
            <person name="Simmonds M.N."/>
            <person name="Spiegler S."/>
            <person name="Tivey A."/>
            <person name="Sugano S."/>
            <person name="White B."/>
            <person name="Walker D."/>
            <person name="Woodward J.R."/>
            <person name="Winckler T."/>
            <person name="Tanaka Y."/>
            <person name="Shaulsky G."/>
            <person name="Schleicher M."/>
            <person name="Weinstock G.M."/>
            <person name="Rosenthal A."/>
            <person name="Cox E.C."/>
            <person name="Chisholm R.L."/>
            <person name="Gibbs R.A."/>
            <person name="Loomis W.F."/>
            <person name="Platzer M."/>
            <person name="Kay R.R."/>
            <person name="Williams J.G."/>
            <person name="Dear P.H."/>
            <person name="Noegel A.A."/>
            <person name="Barrell B.G."/>
            <person name="Kuspa A."/>
        </authorList>
    </citation>
    <scope>NUCLEOTIDE SEQUENCE [LARGE SCALE GENOMIC DNA]</scope>
    <source>
        <strain>AX4</strain>
    </source>
</reference>
<reference key="3">
    <citation type="journal article" date="2001" name="J. Biol. Chem.">
        <title>Characterization of CD36/LIMPII homologues in Dictyostelium discoideum.</title>
        <authorList>
            <person name="Janssen K.-P."/>
            <person name="Rost R."/>
            <person name="Eichinger L."/>
            <person name="Schleicher M."/>
        </authorList>
    </citation>
    <scope>DEVELOPMENTAL STAGE</scope>
    <scope>SUBCELLULAR LOCATION</scope>
    <scope>GLYCOSYLATION</scope>
    <scope>TOPOLOGY</scope>
</reference>
<gene>
    <name type="primary">lmpA</name>
    <name type="ORF">DDB_G0267406</name>
</gene>
<proteinExistence type="evidence at protein level"/>
<evidence type="ECO:0000250" key="1"/>
<evidence type="ECO:0000255" key="2"/>
<evidence type="ECO:0000269" key="3">
    <source>
    </source>
</evidence>
<evidence type="ECO:0000269" key="4">
    <source>
    </source>
</evidence>
<evidence type="ECO:0000305" key="5"/>
<organism>
    <name type="scientific">Dictyostelium discoideum</name>
    <name type="common">Social amoeba</name>
    <dbReference type="NCBI Taxonomy" id="44689"/>
    <lineage>
        <taxon>Eukaryota</taxon>
        <taxon>Amoebozoa</taxon>
        <taxon>Evosea</taxon>
        <taxon>Eumycetozoa</taxon>
        <taxon>Dictyostelia</taxon>
        <taxon>Dictyosteliales</taxon>
        <taxon>Dictyosteliaceae</taxon>
        <taxon>Dictyostelium</taxon>
    </lineage>
</organism>
<keyword id="KW-0325">Glycoprotein</keyword>
<keyword id="KW-0458">Lysosome</keyword>
<keyword id="KW-0472">Membrane</keyword>
<keyword id="KW-1185">Reference proteome</keyword>
<keyword id="KW-0812">Transmembrane</keyword>
<keyword id="KW-1133">Transmembrane helix</keyword>
<accession>Q9XYS8</accession>
<accession>Q55FR1</accession>
<protein>
    <recommendedName>
        <fullName>Lysosome membrane protein 2-A</fullName>
    </recommendedName>
    <alternativeName>
        <fullName>Lysosome membrane protein II-1</fullName>
        <shortName>LIMP II-1</shortName>
    </alternativeName>
</protein>
<dbReference type="EMBL" id="AF124329">
    <property type="protein sequence ID" value="AAD25077.1"/>
    <property type="molecule type" value="mRNA"/>
</dbReference>
<dbReference type="EMBL" id="AAFI02000003">
    <property type="protein sequence ID" value="EAL73155.1"/>
    <property type="molecule type" value="Genomic_DNA"/>
</dbReference>
<dbReference type="RefSeq" id="XP_647472.1">
    <property type="nucleotide sequence ID" value="XM_642380.1"/>
</dbReference>
<dbReference type="FunCoup" id="Q9XYS8">
    <property type="interactions" value="2"/>
</dbReference>
<dbReference type="STRING" id="44689.Q9XYS8"/>
<dbReference type="GlyCosmos" id="Q9XYS8">
    <property type="glycosylation" value="19 sites, No reported glycans"/>
</dbReference>
<dbReference type="GlyGen" id="Q9XYS8">
    <property type="glycosylation" value="20 sites"/>
</dbReference>
<dbReference type="PaxDb" id="44689-DDB0191500"/>
<dbReference type="ABCD" id="Q9XYS8">
    <property type="antibodies" value="2 sequenced antibodies"/>
</dbReference>
<dbReference type="EnsemblProtists" id="EAL73155">
    <property type="protein sequence ID" value="EAL73155"/>
    <property type="gene ID" value="DDB_G0267406"/>
</dbReference>
<dbReference type="GeneID" id="8616279"/>
<dbReference type="KEGG" id="ddi:DDB_G0267406"/>
<dbReference type="dictyBase" id="DDB_G0267406">
    <property type="gene designation" value="lmpA"/>
</dbReference>
<dbReference type="VEuPathDB" id="AmoebaDB:DDB_G0267406"/>
<dbReference type="eggNOG" id="KOG3776">
    <property type="taxonomic scope" value="Eukaryota"/>
</dbReference>
<dbReference type="HOGENOM" id="CLU_358414_0_0_1"/>
<dbReference type="InParanoid" id="Q9XYS8"/>
<dbReference type="OMA" id="CALQQNN"/>
<dbReference type="PhylomeDB" id="Q9XYS8"/>
<dbReference type="Reactome" id="R-DDI-114608">
    <property type="pathway name" value="Platelet degranulation"/>
</dbReference>
<dbReference type="Reactome" id="R-DDI-434313">
    <property type="pathway name" value="Intracellular metabolism of fatty acids regulates insulin secretion"/>
</dbReference>
<dbReference type="Reactome" id="R-DDI-6798695">
    <property type="pathway name" value="Neutrophil degranulation"/>
</dbReference>
<dbReference type="PRO" id="PR:Q9XYS8"/>
<dbReference type="Proteomes" id="UP000002195">
    <property type="component" value="Chromosome 1"/>
</dbReference>
<dbReference type="GO" id="GO:0032009">
    <property type="term" value="C:early phagosome"/>
    <property type="evidence" value="ECO:0000314"/>
    <property type="project" value="dictyBase"/>
</dbReference>
<dbReference type="GO" id="GO:0005765">
    <property type="term" value="C:lysosomal membrane"/>
    <property type="evidence" value="ECO:0007669"/>
    <property type="project" value="UniProtKB-SubCell"/>
</dbReference>
<dbReference type="GO" id="GO:0005764">
    <property type="term" value="C:lysosome"/>
    <property type="evidence" value="ECO:0000314"/>
    <property type="project" value="dictyBase"/>
</dbReference>
<dbReference type="GO" id="GO:0044354">
    <property type="term" value="C:macropinosome"/>
    <property type="evidence" value="ECO:0000314"/>
    <property type="project" value="dictyBase"/>
</dbReference>
<dbReference type="GO" id="GO:0140220">
    <property type="term" value="C:pathogen-containing vacuole"/>
    <property type="evidence" value="ECO:0000314"/>
    <property type="project" value="dictyBase"/>
</dbReference>
<dbReference type="GO" id="GO:0045335">
    <property type="term" value="C:phagocytic vesicle"/>
    <property type="evidence" value="ECO:0000314"/>
    <property type="project" value="dictyBase"/>
</dbReference>
<dbReference type="GO" id="GO:0032010">
    <property type="term" value="C:phagolysosome"/>
    <property type="evidence" value="ECO:0000314"/>
    <property type="project" value="dictyBase"/>
</dbReference>
<dbReference type="GO" id="GO:0012506">
    <property type="term" value="C:vesicle membrane"/>
    <property type="evidence" value="ECO:0000314"/>
    <property type="project" value="dictyBase"/>
</dbReference>
<dbReference type="GO" id="GO:0005546">
    <property type="term" value="F:phosphatidylinositol-4,5-bisphosphate binding"/>
    <property type="evidence" value="ECO:0000314"/>
    <property type="project" value="dictyBase"/>
</dbReference>
<dbReference type="GO" id="GO:0005044">
    <property type="term" value="F:scavenger receptor activity"/>
    <property type="evidence" value="ECO:0000318"/>
    <property type="project" value="GO_Central"/>
</dbReference>
<dbReference type="GO" id="GO:0050830">
    <property type="term" value="P:defense response to Gram-positive bacterium"/>
    <property type="evidence" value="ECO:0000314"/>
    <property type="project" value="dictyBase"/>
</dbReference>
<dbReference type="GO" id="GO:0000281">
    <property type="term" value="P:mitotic cytokinesis"/>
    <property type="evidence" value="ECO:0000316"/>
    <property type="project" value="dictyBase"/>
</dbReference>
<dbReference type="GO" id="GO:0006911">
    <property type="term" value="P:phagocytosis, engulfment"/>
    <property type="evidence" value="ECO:0000315"/>
    <property type="project" value="dictyBase"/>
</dbReference>
<dbReference type="GO" id="GO:0001845">
    <property type="term" value="P:phagolysosome assembly"/>
    <property type="evidence" value="ECO:0000314"/>
    <property type="project" value="dictyBase"/>
</dbReference>
<dbReference type="GO" id="GO:0090383">
    <property type="term" value="P:phagosome acidification"/>
    <property type="evidence" value="ECO:0000315"/>
    <property type="project" value="dictyBase"/>
</dbReference>
<dbReference type="GO" id="GO:0044655">
    <property type="term" value="P:phagosome reneutralization"/>
    <property type="evidence" value="ECO:0000315"/>
    <property type="project" value="dictyBase"/>
</dbReference>
<dbReference type="GO" id="GO:0030587">
    <property type="term" value="P:sorocarp development"/>
    <property type="evidence" value="ECO:0000316"/>
    <property type="project" value="dictyBase"/>
</dbReference>
<dbReference type="InterPro" id="IPR002159">
    <property type="entry name" value="CD36_fam"/>
</dbReference>
<dbReference type="InterPro" id="IPR008983">
    <property type="entry name" value="Tumour_necrosis_fac-like_dom"/>
</dbReference>
<dbReference type="PANTHER" id="PTHR11923:SF48">
    <property type="entry name" value="LYSOSOME MEMBRANE PROTEIN 2-A"/>
    <property type="match status" value="1"/>
</dbReference>
<dbReference type="PANTHER" id="PTHR11923">
    <property type="entry name" value="SCAVENGER RECEPTOR CLASS B TYPE-1 SR-B1"/>
    <property type="match status" value="1"/>
</dbReference>
<dbReference type="Pfam" id="PF01130">
    <property type="entry name" value="CD36"/>
    <property type="match status" value="2"/>
</dbReference>
<dbReference type="SUPFAM" id="SSF49842">
    <property type="entry name" value="TNF-like"/>
    <property type="match status" value="1"/>
</dbReference>
<comment type="function">
    <text evidence="1">May act as a lysosomal receptor (By similarity). May be involved in macropinocytosis and fluid phase exocytosis. Binds to the anionic phospholipid phosphoinositol 4,5-bisphosphate, but not to phosphatidylcholine and only weakly to phosphatidylserine.</text>
</comment>
<comment type="subcellular location">
    <subcellularLocation>
        <location evidence="5">Lysosome membrane</location>
        <topology evidence="5">Multi-pass membrane protein</topology>
    </subcellularLocation>
    <text evidence="3 4">Localizes to membranes of endolysosomal vesicles and macropinosomes.</text>
</comment>
<comment type="developmental stage">
    <text evidence="4">Found at all stages of development. Down-regulated at the onset of aggregation, but small amounts are still detectable at late stages of development (at protein level).</text>
</comment>
<comment type="PTM">
    <text evidence="4">Heavily glycosylated.</text>
</comment>
<comment type="similarity">
    <text evidence="5">Belongs to the CD36 family.</text>
</comment>
<sequence length="779" mass="87829">MVKRGCCHRKMVNHKGCLVSGIFLAVIGAVLFILAFALLPHLINQTTQNAVIQAVIVDSTSSQRYNDWAGQQSIENYYQQYFYAWNLTNPNEFLNGSIPIFETVGPFNYKYEFNFSNVTFQDGGNLATYTQSKSFIYQSDMSPNDPNEIMITNINPAYLGLMFQLAPNAELLDNMPAENLLIALSGCGQMRLFLEYLSSDNFTNIVYFTQNPKLYQEQYLNILKSLNGDEQYFYQQWANATSIPQKGNGWYGMLVSSVNNNNESSNISILSAKLLFNSSNENSILNQEIGSTLWINALLGDKTSITVLTSELQLTVDQIDMILNWWLNDFSKVYTESYVNEICDIPDISMLGVCQFVTGNALNGRSISNYTFLTQPFDQGPIEIPLLYQSIGIDVKLSVSVQQAYKSLFNESDSNSILNLNGLVNFLTASKSFDTFKQYNVTLFDAIKIIGYATAELYEQYNKPTILGLYEKYGGLIVTRSMDDWLWNCQDGILDYLGVDQPCALQQNNTVNKPSTIFTGQQDLSMTNQIFEFQEQTFLTCWNGSVQVEGFTESGQFPPLQSDPPQTMTLFEENVIRPVQLELSGDSQVQGIDTKRYYLVNNSFPISTTFKTTIPGFANLTDIQNLPIYVSLWDMYEVPPQYSSNNLQGLNQTYQSAQVPLDLEPITGNALYYNLKLQINLAIPEFSNWFSSNSTFKNMKSNVFYPILKIGQTATPSQSNIDLLNSQFKLIKILGFVPVIVVSIIGGIILIAGISMFAFGFKKLRQQKQQGYQAIINNE</sequence>